<comment type="cofactor">
    <cofactor evidence="1">
        <name>Zn(2+)</name>
        <dbReference type="ChEBI" id="CHEBI:29105"/>
    </cofactor>
    <text evidence="1">Binds 1 zinc ion.</text>
</comment>
<comment type="subcellular location">
    <subcellularLocation>
        <location evidence="1">Cytoplasm</location>
    </subcellularLocation>
</comment>
<comment type="similarity">
    <text evidence="1">Belongs to the SprT family.</text>
</comment>
<name>SPRTL_STAEQ</name>
<evidence type="ECO:0000255" key="1">
    <source>
        <dbReference type="HAMAP-Rule" id="MF_00745"/>
    </source>
</evidence>
<keyword id="KW-0963">Cytoplasm</keyword>
<keyword id="KW-0479">Metal-binding</keyword>
<keyword id="KW-1185">Reference proteome</keyword>
<keyword id="KW-0862">Zinc</keyword>
<protein>
    <recommendedName>
        <fullName evidence="1">Protein SprT-like</fullName>
    </recommendedName>
</protein>
<sequence length="151" mass="17752">MNNLALQSLTESIAIKYFGKAFKHEVYYNKRLRTTGGRYILSSHNIEINPKQYEMFGEKAVIDIIKHELCHYFLHLAGEGYQHRDKAFKSLSAKVGAPRFCTPTESYQDRANYKYRCIYCEQEFIRIKRVNLEKMRCGRCGGILKLLQTRK</sequence>
<dbReference type="EMBL" id="CP000029">
    <property type="protein sequence ID" value="AAW55031.1"/>
    <property type="molecule type" value="Genomic_DNA"/>
</dbReference>
<dbReference type="RefSeq" id="WP_001829897.1">
    <property type="nucleotide sequence ID" value="NC_002976.3"/>
</dbReference>
<dbReference type="STRING" id="176279.SERP1675"/>
<dbReference type="KEGG" id="ser:SERP1675"/>
<dbReference type="eggNOG" id="COG3091">
    <property type="taxonomic scope" value="Bacteria"/>
</dbReference>
<dbReference type="HOGENOM" id="CLU_123820_0_0_9"/>
<dbReference type="Proteomes" id="UP000000531">
    <property type="component" value="Chromosome"/>
</dbReference>
<dbReference type="GO" id="GO:0005737">
    <property type="term" value="C:cytoplasm"/>
    <property type="evidence" value="ECO:0007669"/>
    <property type="project" value="UniProtKB-SubCell"/>
</dbReference>
<dbReference type="GO" id="GO:0008270">
    <property type="term" value="F:zinc ion binding"/>
    <property type="evidence" value="ECO:0007669"/>
    <property type="project" value="UniProtKB-UniRule"/>
</dbReference>
<dbReference type="GO" id="GO:0006950">
    <property type="term" value="P:response to stress"/>
    <property type="evidence" value="ECO:0007669"/>
    <property type="project" value="UniProtKB-ARBA"/>
</dbReference>
<dbReference type="HAMAP" id="MF_00745">
    <property type="entry name" value="SprT_like"/>
    <property type="match status" value="1"/>
</dbReference>
<dbReference type="InterPro" id="IPR006640">
    <property type="entry name" value="SprT-like_domain"/>
</dbReference>
<dbReference type="InterPro" id="IPR035240">
    <property type="entry name" value="SprT_Zn_ribbon"/>
</dbReference>
<dbReference type="InterPro" id="IPR023524">
    <property type="entry name" value="Uncharacterised_SprT-like"/>
</dbReference>
<dbReference type="NCBIfam" id="NF003339">
    <property type="entry name" value="PRK04351.1"/>
    <property type="match status" value="1"/>
</dbReference>
<dbReference type="Pfam" id="PF10263">
    <property type="entry name" value="SprT-like"/>
    <property type="match status" value="1"/>
</dbReference>
<dbReference type="Pfam" id="PF17283">
    <property type="entry name" value="Zn_ribbon_SprT"/>
    <property type="match status" value="1"/>
</dbReference>
<dbReference type="SMART" id="SM00731">
    <property type="entry name" value="SprT"/>
    <property type="match status" value="1"/>
</dbReference>
<organism>
    <name type="scientific">Staphylococcus epidermidis (strain ATCC 35984 / DSM 28319 / BCRC 17069 / CCUG 31568 / BM 3577 / RP62A)</name>
    <dbReference type="NCBI Taxonomy" id="176279"/>
    <lineage>
        <taxon>Bacteria</taxon>
        <taxon>Bacillati</taxon>
        <taxon>Bacillota</taxon>
        <taxon>Bacilli</taxon>
        <taxon>Bacillales</taxon>
        <taxon>Staphylococcaceae</taxon>
        <taxon>Staphylococcus</taxon>
    </lineage>
</organism>
<proteinExistence type="inferred from homology"/>
<reference key="1">
    <citation type="journal article" date="2005" name="J. Bacteriol.">
        <title>Insights on evolution of virulence and resistance from the complete genome analysis of an early methicillin-resistant Staphylococcus aureus strain and a biofilm-producing methicillin-resistant Staphylococcus epidermidis strain.</title>
        <authorList>
            <person name="Gill S.R."/>
            <person name="Fouts D.E."/>
            <person name="Archer G.L."/>
            <person name="Mongodin E.F."/>
            <person name="DeBoy R.T."/>
            <person name="Ravel J."/>
            <person name="Paulsen I.T."/>
            <person name="Kolonay J.F."/>
            <person name="Brinkac L.M."/>
            <person name="Beanan M.J."/>
            <person name="Dodson R.J."/>
            <person name="Daugherty S.C."/>
            <person name="Madupu R."/>
            <person name="Angiuoli S.V."/>
            <person name="Durkin A.S."/>
            <person name="Haft D.H."/>
            <person name="Vamathevan J.J."/>
            <person name="Khouri H."/>
            <person name="Utterback T.R."/>
            <person name="Lee C."/>
            <person name="Dimitrov G."/>
            <person name="Jiang L."/>
            <person name="Qin H."/>
            <person name="Weidman J."/>
            <person name="Tran K."/>
            <person name="Kang K.H."/>
            <person name="Hance I.R."/>
            <person name="Nelson K.E."/>
            <person name="Fraser C.M."/>
        </authorList>
    </citation>
    <scope>NUCLEOTIDE SEQUENCE [LARGE SCALE GENOMIC DNA]</scope>
    <source>
        <strain>ATCC 35984 / DSM 28319 / BCRC 17069 / CCUG 31568 / BM 3577 / RP62A</strain>
    </source>
</reference>
<gene>
    <name type="ordered locus">SERP1675</name>
</gene>
<feature type="chain" id="PRO_0000213303" description="Protein SprT-like">
    <location>
        <begin position="1"/>
        <end position="151"/>
    </location>
</feature>
<feature type="domain" description="SprT-like" evidence="1">
    <location>
        <begin position="7"/>
        <end position="146"/>
    </location>
</feature>
<feature type="active site" evidence="1">
    <location>
        <position position="68"/>
    </location>
</feature>
<feature type="binding site" evidence="1">
    <location>
        <position position="67"/>
    </location>
    <ligand>
        <name>Zn(2+)</name>
        <dbReference type="ChEBI" id="CHEBI:29105"/>
    </ligand>
</feature>
<feature type="binding site" evidence="1">
    <location>
        <position position="71"/>
    </location>
    <ligand>
        <name>Zn(2+)</name>
        <dbReference type="ChEBI" id="CHEBI:29105"/>
    </ligand>
</feature>
<accession>Q5HMF3</accession>